<name>SYK_RICAE</name>
<protein>
    <recommendedName>
        <fullName evidence="1">Lysine--tRNA ligase</fullName>
        <ecNumber evidence="1">6.1.1.6</ecNumber>
    </recommendedName>
    <alternativeName>
        <fullName evidence="1">Lysyl-tRNA synthetase</fullName>
        <shortName evidence="1">LysRS</shortName>
    </alternativeName>
</protein>
<feature type="chain" id="PRO_1000203780" description="Lysine--tRNA ligase">
    <location>
        <begin position="1"/>
        <end position="522"/>
    </location>
</feature>
<feature type="short sequence motif" description="'HIGH' region">
    <location>
        <begin position="44"/>
        <end position="52"/>
    </location>
</feature>
<feature type="short sequence motif" description="'KMSKS' region">
    <location>
        <begin position="290"/>
        <end position="294"/>
    </location>
</feature>
<feature type="binding site" evidence="1">
    <location>
        <position position="293"/>
    </location>
    <ligand>
        <name>ATP</name>
        <dbReference type="ChEBI" id="CHEBI:30616"/>
    </ligand>
</feature>
<reference key="1">
    <citation type="journal article" date="2009" name="BMC Genomics">
        <title>Analysis of the Rickettsia africae genome reveals that virulence acquisition in Rickettsia species may be explained by genome reduction.</title>
        <authorList>
            <person name="Fournier P.-E."/>
            <person name="El Karkouri K."/>
            <person name="Leroy Q."/>
            <person name="Robert C."/>
            <person name="Giumelli B."/>
            <person name="Renesto P."/>
            <person name="Socolovschi C."/>
            <person name="Parola P."/>
            <person name="Audic S."/>
            <person name="Raoult D."/>
        </authorList>
    </citation>
    <scope>NUCLEOTIDE SEQUENCE [LARGE SCALE GENOMIC DNA]</scope>
    <source>
        <strain>ESF-5</strain>
    </source>
</reference>
<proteinExistence type="inferred from homology"/>
<accession>C3PN86</accession>
<keyword id="KW-0030">Aminoacyl-tRNA synthetase</keyword>
<keyword id="KW-0067">ATP-binding</keyword>
<keyword id="KW-0963">Cytoplasm</keyword>
<keyword id="KW-0436">Ligase</keyword>
<keyword id="KW-0547">Nucleotide-binding</keyword>
<keyword id="KW-0648">Protein biosynthesis</keyword>
<dbReference type="EC" id="6.1.1.6" evidence="1"/>
<dbReference type="EMBL" id="CP001612">
    <property type="protein sequence ID" value="ACP53396.1"/>
    <property type="molecule type" value="Genomic_DNA"/>
</dbReference>
<dbReference type="RefSeq" id="WP_012719626.1">
    <property type="nucleotide sequence ID" value="NC_012633.1"/>
</dbReference>
<dbReference type="SMR" id="C3PN86"/>
<dbReference type="KEGG" id="raf:RAF_ORF0472"/>
<dbReference type="HOGENOM" id="CLU_025562_2_0_5"/>
<dbReference type="Proteomes" id="UP000002305">
    <property type="component" value="Chromosome"/>
</dbReference>
<dbReference type="GO" id="GO:0005737">
    <property type="term" value="C:cytoplasm"/>
    <property type="evidence" value="ECO:0007669"/>
    <property type="project" value="UniProtKB-SubCell"/>
</dbReference>
<dbReference type="GO" id="GO:0005524">
    <property type="term" value="F:ATP binding"/>
    <property type="evidence" value="ECO:0007669"/>
    <property type="project" value="UniProtKB-UniRule"/>
</dbReference>
<dbReference type="GO" id="GO:0004824">
    <property type="term" value="F:lysine-tRNA ligase activity"/>
    <property type="evidence" value="ECO:0007669"/>
    <property type="project" value="UniProtKB-UniRule"/>
</dbReference>
<dbReference type="GO" id="GO:0000049">
    <property type="term" value="F:tRNA binding"/>
    <property type="evidence" value="ECO:0007669"/>
    <property type="project" value="InterPro"/>
</dbReference>
<dbReference type="GO" id="GO:0006430">
    <property type="term" value="P:lysyl-tRNA aminoacylation"/>
    <property type="evidence" value="ECO:0007669"/>
    <property type="project" value="UniProtKB-UniRule"/>
</dbReference>
<dbReference type="Gene3D" id="1.10.10.350">
    <property type="match status" value="1"/>
</dbReference>
<dbReference type="Gene3D" id="3.40.50.620">
    <property type="entry name" value="HUPs"/>
    <property type="match status" value="2"/>
</dbReference>
<dbReference type="HAMAP" id="MF_00177">
    <property type="entry name" value="Lys_tRNA_synth_class1"/>
    <property type="match status" value="1"/>
</dbReference>
<dbReference type="InterPro" id="IPR020751">
    <property type="entry name" value="aa-tRNA-synth_I_codon-bd_sub2"/>
</dbReference>
<dbReference type="InterPro" id="IPR001412">
    <property type="entry name" value="aa-tRNA-synth_I_CS"/>
</dbReference>
<dbReference type="InterPro" id="IPR008925">
    <property type="entry name" value="aa_tRNA-synth_I_cd-bd_sf"/>
</dbReference>
<dbReference type="InterPro" id="IPR002904">
    <property type="entry name" value="Lys-tRNA-ligase"/>
</dbReference>
<dbReference type="InterPro" id="IPR014729">
    <property type="entry name" value="Rossmann-like_a/b/a_fold"/>
</dbReference>
<dbReference type="NCBIfam" id="TIGR00467">
    <property type="entry name" value="lysS_arch"/>
    <property type="match status" value="1"/>
</dbReference>
<dbReference type="NCBIfam" id="NF001968">
    <property type="entry name" value="PRK00750.1-2"/>
    <property type="match status" value="1"/>
</dbReference>
<dbReference type="PANTHER" id="PTHR37940">
    <property type="entry name" value="LYSINE--TRNA LIGASE"/>
    <property type="match status" value="1"/>
</dbReference>
<dbReference type="PANTHER" id="PTHR37940:SF1">
    <property type="entry name" value="LYSINE--TRNA LIGASE"/>
    <property type="match status" value="1"/>
</dbReference>
<dbReference type="Pfam" id="PF01921">
    <property type="entry name" value="tRNA-synt_1f"/>
    <property type="match status" value="1"/>
</dbReference>
<dbReference type="SUPFAM" id="SSF48163">
    <property type="entry name" value="An anticodon-binding domain of class I aminoacyl-tRNA synthetases"/>
    <property type="match status" value="1"/>
</dbReference>
<dbReference type="SUPFAM" id="SSF52374">
    <property type="entry name" value="Nucleotidylyl transferase"/>
    <property type="match status" value="1"/>
</dbReference>
<dbReference type="PROSITE" id="PS00178">
    <property type="entry name" value="AA_TRNA_LIGASE_I"/>
    <property type="match status" value="1"/>
</dbReference>
<organism>
    <name type="scientific">Rickettsia africae (strain ESF-5)</name>
    <dbReference type="NCBI Taxonomy" id="347255"/>
    <lineage>
        <taxon>Bacteria</taxon>
        <taxon>Pseudomonadati</taxon>
        <taxon>Pseudomonadota</taxon>
        <taxon>Alphaproteobacteria</taxon>
        <taxon>Rickettsiales</taxon>
        <taxon>Rickettsiaceae</taxon>
        <taxon>Rickettsieae</taxon>
        <taxon>Rickettsia</taxon>
        <taxon>spotted fever group</taxon>
    </lineage>
</organism>
<sequence>MSKIWEDAIKSNAWPFVEAKKILDSLNGQIPEKGYVLFETGYGPSGLPHIGTFGENARMVMVQKAFEQLSDIPTKLICFSDDMDGLRKVPSNIPNPEMVAQYMDMPLTSIPDTFGECESYGHYMNAKLRSFLDKFGFEYEFYSSTNCYKAGMFDEMLRMVLEKYDEIMELMLPTFREERKATYSPFMPICPKTGKVLQVPIEKWDAKAGTVTYKDKAGNYIEVPVTGGHCKLQWKPDFGMRWAALKVDYEMYGKDHLANARLYSEICRILGGKPPVQLCYELFLDENGEKISKSKGNSISIDDWLKYAPVESMALFMYQNPTRAKRLFFDVIPKNVDEYITFNQKYHLEEDRAKRFANPVYHIHHGNVPKIETFGITYSLLLNLTSVCNPSDKSVLWGFISKYEPKATPNTNPYLDHLAEFAIRYYNDFIKAHKSYLSPSEKHKVILQDILDMLSDIADQTEAEAIQKAIYDIGMKAGYENLRDYFKDLYQILLGQNEGPRLGTFIKLYGVQEMKKLVEGQL</sequence>
<gene>
    <name evidence="1" type="primary">lysS</name>
    <name type="ordered locus">RAF_ORF0472</name>
</gene>
<evidence type="ECO:0000255" key="1">
    <source>
        <dbReference type="HAMAP-Rule" id="MF_00177"/>
    </source>
</evidence>
<comment type="catalytic activity">
    <reaction evidence="1">
        <text>tRNA(Lys) + L-lysine + ATP = L-lysyl-tRNA(Lys) + AMP + diphosphate</text>
        <dbReference type="Rhea" id="RHEA:20792"/>
        <dbReference type="Rhea" id="RHEA-COMP:9696"/>
        <dbReference type="Rhea" id="RHEA-COMP:9697"/>
        <dbReference type="ChEBI" id="CHEBI:30616"/>
        <dbReference type="ChEBI" id="CHEBI:32551"/>
        <dbReference type="ChEBI" id="CHEBI:33019"/>
        <dbReference type="ChEBI" id="CHEBI:78442"/>
        <dbReference type="ChEBI" id="CHEBI:78529"/>
        <dbReference type="ChEBI" id="CHEBI:456215"/>
        <dbReference type="EC" id="6.1.1.6"/>
    </reaction>
</comment>
<comment type="subcellular location">
    <subcellularLocation>
        <location evidence="1">Cytoplasm</location>
    </subcellularLocation>
</comment>
<comment type="similarity">
    <text evidence="1">Belongs to the class-I aminoacyl-tRNA synthetase family.</text>
</comment>